<feature type="chain" id="PRO_0000412818" description="Rhodopsin kinase grk7-b">
    <location>
        <begin position="1"/>
        <end position="547"/>
    </location>
</feature>
<feature type="propeptide" id="PRO_0000412819" description="Removed in mature form" evidence="1">
    <location>
        <begin position="548"/>
        <end position="550"/>
    </location>
</feature>
<feature type="domain" description="RGS" evidence="6">
    <location>
        <begin position="57"/>
        <end position="174"/>
    </location>
</feature>
<feature type="domain" description="Protein kinase" evidence="5">
    <location>
        <begin position="189"/>
        <end position="451"/>
    </location>
</feature>
<feature type="domain" description="AGC-kinase C-terminal" evidence="7">
    <location>
        <begin position="452"/>
        <end position="517"/>
    </location>
</feature>
<feature type="region of interest" description="Disordered" evidence="9">
    <location>
        <begin position="22"/>
        <end position="45"/>
    </location>
</feature>
<feature type="region of interest" description="Disordered" evidence="9">
    <location>
        <begin position="531"/>
        <end position="550"/>
    </location>
</feature>
<feature type="active site" description="Proton acceptor" evidence="5 8">
    <location>
        <position position="314"/>
    </location>
</feature>
<feature type="binding site" evidence="5">
    <location>
        <begin position="195"/>
        <end position="203"/>
    </location>
    <ligand>
        <name>ATP</name>
        <dbReference type="ChEBI" id="CHEBI:30616"/>
    </ligand>
</feature>
<feature type="binding site" evidence="5">
    <location>
        <position position="218"/>
    </location>
    <ligand>
        <name>ATP</name>
        <dbReference type="ChEBI" id="CHEBI:30616"/>
    </ligand>
</feature>
<feature type="modified residue" description="Phosphoserine" evidence="10">
    <location>
        <position position="36"/>
    </location>
</feature>
<feature type="modified residue" description="Phosphoserine" evidence="1">
    <location>
        <position position="487"/>
    </location>
</feature>
<feature type="modified residue" description="Cysteine methyl ester" evidence="4">
    <location>
        <position position="547"/>
    </location>
</feature>
<feature type="lipid moiety-binding region" description="S-geranylgeranyl cysteine" evidence="4">
    <location>
        <position position="547"/>
    </location>
</feature>
<sequence length="550" mass="62493">MCDMGGLDNLIANTAYLQARKSSEGDAKELQKRRKSLSLPPPDVSRNEVKETITLDYQSICVEQPIGQRLFKDFLATVPEYKLAEDFLEEVKEWELEEGSAKEQLMEKLVSRRFKEPAEGSLNFLGKDLSSRIQQAQSKDMPELILLAKDSGNAFLMDAPFQDFQNSPFYDRFLQWKAFERQPINQKYFYEFRILGKGGFGEVCAIQVKNTGQMYACKKLDKKRLKKKNGEKMALLEKEILEKVHSPFIVSLAYAYETKTHLCLVMSLMNGGDLKFHIYNVGDKGVEIKRVIFYSAQICCGILHLHSLKIVYRDMKPENVLLDDHGNCRLSDLGLAVKVKEGKAITQRAGTNGYMAPEILTDEDYSYPVDWFAMGCSIFEMIAAYTPFRDPKEKTSKEELKRKTLEDEVVFPLPTFTEEAKDICRLFLAKKPQNRLGSRTNDDDPRKHAFFKSINFQRLEAGMVDPPFVPDPSVVYAKDISDIADFSEVKGIEFDDKDAKLFKRFSTGAVPISWQKEIIDTGLFDELNDPSREVTGGGNSGEKSGVCSIL</sequence>
<reference key="1">
    <citation type="journal article" date="2008" name="J. Neurochem.">
        <title>Phosphorylation of GRK7 by PKA in cone photoreceptor cells is regulated by light.</title>
        <authorList>
            <person name="Osawa S."/>
            <person name="Jo R."/>
            <person name="Weiss E.R."/>
        </authorList>
    </citation>
    <scope>NUCLEOTIDE SEQUENCE [MRNA]</scope>
    <scope>TISSUE SPECIFICITY</scope>
    <scope>PHOSPHORYLATION AT SER-36</scope>
</reference>
<gene>
    <name type="primary">grk7-b</name>
</gene>
<evidence type="ECO:0000250" key="1"/>
<evidence type="ECO:0000250" key="2">
    <source>
        <dbReference type="UniProtKB" id="Q8WMV0"/>
    </source>
</evidence>
<evidence type="ECO:0000250" key="3">
    <source>
        <dbReference type="UniProtKB" id="Q8WTQ7"/>
    </source>
</evidence>
<evidence type="ECO:0000255" key="4"/>
<evidence type="ECO:0000255" key="5">
    <source>
        <dbReference type="PROSITE-ProRule" id="PRU00159"/>
    </source>
</evidence>
<evidence type="ECO:0000255" key="6">
    <source>
        <dbReference type="PROSITE-ProRule" id="PRU00171"/>
    </source>
</evidence>
<evidence type="ECO:0000255" key="7">
    <source>
        <dbReference type="PROSITE-ProRule" id="PRU00618"/>
    </source>
</evidence>
<evidence type="ECO:0000255" key="8">
    <source>
        <dbReference type="PROSITE-ProRule" id="PRU10027"/>
    </source>
</evidence>
<evidence type="ECO:0000256" key="9">
    <source>
        <dbReference type="SAM" id="MobiDB-lite"/>
    </source>
</evidence>
<evidence type="ECO:0000269" key="10">
    <source>
    </source>
</evidence>
<evidence type="ECO:0000305" key="11"/>
<keyword id="KW-0067">ATP-binding</keyword>
<keyword id="KW-0418">Kinase</keyword>
<keyword id="KW-0449">Lipoprotein</keyword>
<keyword id="KW-0472">Membrane</keyword>
<keyword id="KW-0488">Methylation</keyword>
<keyword id="KW-0547">Nucleotide-binding</keyword>
<keyword id="KW-0597">Phosphoprotein</keyword>
<keyword id="KW-0636">Prenylation</keyword>
<keyword id="KW-1185">Reference proteome</keyword>
<keyword id="KW-0716">Sensory transduction</keyword>
<keyword id="KW-0723">Serine/threonine-protein kinase</keyword>
<keyword id="KW-0808">Transferase</keyword>
<keyword id="KW-0844">Vision</keyword>
<name>GRK7B_XENLA</name>
<proteinExistence type="evidence at protein level"/>
<dbReference type="EC" id="2.7.11.14" evidence="3"/>
<dbReference type="EMBL" id="EU621674">
    <property type="protein sequence ID" value="ACF28431.1"/>
    <property type="molecule type" value="mRNA"/>
</dbReference>
<dbReference type="RefSeq" id="NP_001131052.1">
    <property type="nucleotide sequence ID" value="NM_001137580.1"/>
</dbReference>
<dbReference type="SMR" id="B6CZ18"/>
<dbReference type="iPTMnet" id="B6CZ18"/>
<dbReference type="GeneID" id="100192359"/>
<dbReference type="KEGG" id="xla:100192359"/>
<dbReference type="AGR" id="Xenbase:XB-GENE-6252064"/>
<dbReference type="CTD" id="100192359"/>
<dbReference type="Xenbase" id="XB-GENE-6252064">
    <property type="gene designation" value="grk7.S"/>
</dbReference>
<dbReference type="OMA" id="PNRKESC"/>
<dbReference type="OrthoDB" id="354826at2759"/>
<dbReference type="Proteomes" id="UP000186698">
    <property type="component" value="Chromosome 5S"/>
</dbReference>
<dbReference type="Bgee" id="100192359">
    <property type="expression patterns" value="Expressed in camera-type eye and 2 other cell types or tissues"/>
</dbReference>
<dbReference type="GO" id="GO:0005737">
    <property type="term" value="C:cytoplasm"/>
    <property type="evidence" value="ECO:0000318"/>
    <property type="project" value="GO_Central"/>
</dbReference>
<dbReference type="GO" id="GO:0016020">
    <property type="term" value="C:membrane"/>
    <property type="evidence" value="ECO:0007669"/>
    <property type="project" value="UniProtKB-SubCell"/>
</dbReference>
<dbReference type="GO" id="GO:0005524">
    <property type="term" value="F:ATP binding"/>
    <property type="evidence" value="ECO:0007669"/>
    <property type="project" value="UniProtKB-KW"/>
</dbReference>
<dbReference type="GO" id="GO:0050254">
    <property type="term" value="F:rhodopsin kinase activity"/>
    <property type="evidence" value="ECO:0000250"/>
    <property type="project" value="UniProtKB"/>
</dbReference>
<dbReference type="GO" id="GO:0009966">
    <property type="term" value="P:regulation of signal transduction"/>
    <property type="evidence" value="ECO:0000318"/>
    <property type="project" value="GO_Central"/>
</dbReference>
<dbReference type="GO" id="GO:0007165">
    <property type="term" value="P:signal transduction"/>
    <property type="evidence" value="ECO:0007669"/>
    <property type="project" value="InterPro"/>
</dbReference>
<dbReference type="GO" id="GO:0007601">
    <property type="term" value="P:visual perception"/>
    <property type="evidence" value="ECO:0007669"/>
    <property type="project" value="UniProtKB-KW"/>
</dbReference>
<dbReference type="CDD" id="cd05607">
    <property type="entry name" value="STKc_GRK7"/>
    <property type="match status" value="1"/>
</dbReference>
<dbReference type="FunFam" id="1.10.167.10:FF:000027">
    <property type="entry name" value="G protein-coupled receptor kinase"/>
    <property type="match status" value="1"/>
</dbReference>
<dbReference type="FunFam" id="1.10.510.10:FF:000074">
    <property type="entry name" value="G protein-coupled receptor kinase"/>
    <property type="match status" value="1"/>
</dbReference>
<dbReference type="Gene3D" id="3.30.200.20">
    <property type="entry name" value="Phosphorylase Kinase, domain 1"/>
    <property type="match status" value="1"/>
</dbReference>
<dbReference type="Gene3D" id="1.10.167.10">
    <property type="entry name" value="Regulator of G-protein Signalling 4, domain 2"/>
    <property type="match status" value="1"/>
</dbReference>
<dbReference type="Gene3D" id="1.10.510.10">
    <property type="entry name" value="Transferase(Phosphotransferase) domain 1"/>
    <property type="match status" value="1"/>
</dbReference>
<dbReference type="InterPro" id="IPR000961">
    <property type="entry name" value="AGC-kinase_C"/>
</dbReference>
<dbReference type="InterPro" id="IPR000239">
    <property type="entry name" value="GPCR_kinase"/>
</dbReference>
<dbReference type="InterPro" id="IPR011009">
    <property type="entry name" value="Kinase-like_dom_sf"/>
</dbReference>
<dbReference type="InterPro" id="IPR000719">
    <property type="entry name" value="Prot_kinase_dom"/>
</dbReference>
<dbReference type="InterPro" id="IPR017441">
    <property type="entry name" value="Protein_kinase_ATP_BS"/>
</dbReference>
<dbReference type="InterPro" id="IPR016137">
    <property type="entry name" value="RGS"/>
</dbReference>
<dbReference type="InterPro" id="IPR036305">
    <property type="entry name" value="RGS_sf"/>
</dbReference>
<dbReference type="InterPro" id="IPR044926">
    <property type="entry name" value="RGS_subdomain_2"/>
</dbReference>
<dbReference type="InterPro" id="IPR008271">
    <property type="entry name" value="Ser/Thr_kinase_AS"/>
</dbReference>
<dbReference type="PANTHER" id="PTHR24355">
    <property type="entry name" value="G PROTEIN-COUPLED RECEPTOR KINASE/RIBOSOMAL PROTEIN S6 KINASE"/>
    <property type="match status" value="1"/>
</dbReference>
<dbReference type="PANTHER" id="PTHR24355:SF12">
    <property type="entry name" value="RHODOPSIN KINASE GRK7"/>
    <property type="match status" value="1"/>
</dbReference>
<dbReference type="Pfam" id="PF00069">
    <property type="entry name" value="Pkinase"/>
    <property type="match status" value="1"/>
</dbReference>
<dbReference type="Pfam" id="PF00615">
    <property type="entry name" value="RGS"/>
    <property type="match status" value="1"/>
</dbReference>
<dbReference type="PRINTS" id="PR00717">
    <property type="entry name" value="GPCRKINASE"/>
</dbReference>
<dbReference type="SMART" id="SM00315">
    <property type="entry name" value="RGS"/>
    <property type="match status" value="1"/>
</dbReference>
<dbReference type="SMART" id="SM00133">
    <property type="entry name" value="S_TK_X"/>
    <property type="match status" value="1"/>
</dbReference>
<dbReference type="SMART" id="SM00220">
    <property type="entry name" value="S_TKc"/>
    <property type="match status" value="1"/>
</dbReference>
<dbReference type="SUPFAM" id="SSF56112">
    <property type="entry name" value="Protein kinase-like (PK-like)"/>
    <property type="match status" value="1"/>
</dbReference>
<dbReference type="SUPFAM" id="SSF48097">
    <property type="entry name" value="Regulator of G-protein signaling, RGS"/>
    <property type="match status" value="1"/>
</dbReference>
<dbReference type="PROSITE" id="PS51285">
    <property type="entry name" value="AGC_KINASE_CTER"/>
    <property type="match status" value="1"/>
</dbReference>
<dbReference type="PROSITE" id="PS00107">
    <property type="entry name" value="PROTEIN_KINASE_ATP"/>
    <property type="match status" value="1"/>
</dbReference>
<dbReference type="PROSITE" id="PS50011">
    <property type="entry name" value="PROTEIN_KINASE_DOM"/>
    <property type="match status" value="1"/>
</dbReference>
<dbReference type="PROSITE" id="PS00108">
    <property type="entry name" value="PROTEIN_KINASE_ST"/>
    <property type="match status" value="1"/>
</dbReference>
<dbReference type="PROSITE" id="PS50132">
    <property type="entry name" value="RGS"/>
    <property type="match status" value="1"/>
</dbReference>
<comment type="function">
    <text evidence="3">Retina-specific kinase involved in the shutoff of the photoresponse and adaptation to changing light conditions via cone opsin phosphorylation, including rhodopsin (RHO).</text>
</comment>
<comment type="catalytic activity">
    <reaction evidence="3">
        <text>L-threonyl-[rhodopsin] + ATP = O-phospho-L-threonyl-[rhodopsin] + ADP + H(+)</text>
        <dbReference type="Rhea" id="RHEA:56552"/>
        <dbReference type="Rhea" id="RHEA-COMP:14596"/>
        <dbReference type="Rhea" id="RHEA-COMP:14597"/>
        <dbReference type="ChEBI" id="CHEBI:15378"/>
        <dbReference type="ChEBI" id="CHEBI:30013"/>
        <dbReference type="ChEBI" id="CHEBI:30616"/>
        <dbReference type="ChEBI" id="CHEBI:61977"/>
        <dbReference type="ChEBI" id="CHEBI:456216"/>
        <dbReference type="EC" id="2.7.11.14"/>
    </reaction>
</comment>
<comment type="catalytic activity">
    <reaction evidence="3">
        <text>L-seryl-[rhodopsin] + ATP = O-phospho-L-seryl-[rhodopsin] + ADP + H(+)</text>
        <dbReference type="Rhea" id="RHEA:23356"/>
        <dbReference type="Rhea" id="RHEA-COMP:14594"/>
        <dbReference type="Rhea" id="RHEA-COMP:14595"/>
        <dbReference type="ChEBI" id="CHEBI:15378"/>
        <dbReference type="ChEBI" id="CHEBI:29999"/>
        <dbReference type="ChEBI" id="CHEBI:30616"/>
        <dbReference type="ChEBI" id="CHEBI:83421"/>
        <dbReference type="ChEBI" id="CHEBI:456216"/>
        <dbReference type="EC" id="2.7.11.14"/>
    </reaction>
</comment>
<comment type="subcellular location">
    <subcellularLocation>
        <location evidence="2">Membrane</location>
        <topology evidence="2">Lipid-anchor</topology>
    </subcellularLocation>
</comment>
<comment type="tissue specificity">
    <text evidence="10">Retina, cones.</text>
</comment>
<comment type="PTM">
    <text evidence="1 10">Autophosphorylated in vitro at Ser-487 (By similarity). Phosphorylation at Ser-36 is regulated by light and activated by cAMP.</text>
</comment>
<comment type="miscellaneous">
    <text>Although the protein is present in a diversity of vertebrates ranging from bony fish to mammals, the mouse and rat orthologous proteins do not exist.</text>
</comment>
<comment type="similarity">
    <text evidence="11">Belongs to the protein kinase superfamily. AGC Ser/Thr protein kinase family. GPRK subfamily.</text>
</comment>
<accession>B6CZ18</accession>
<organism>
    <name type="scientific">Xenopus laevis</name>
    <name type="common">African clawed frog</name>
    <dbReference type="NCBI Taxonomy" id="8355"/>
    <lineage>
        <taxon>Eukaryota</taxon>
        <taxon>Metazoa</taxon>
        <taxon>Chordata</taxon>
        <taxon>Craniata</taxon>
        <taxon>Vertebrata</taxon>
        <taxon>Euteleostomi</taxon>
        <taxon>Amphibia</taxon>
        <taxon>Batrachia</taxon>
        <taxon>Anura</taxon>
        <taxon>Pipoidea</taxon>
        <taxon>Pipidae</taxon>
        <taxon>Xenopodinae</taxon>
        <taxon>Xenopus</taxon>
        <taxon>Xenopus</taxon>
    </lineage>
</organism>
<protein>
    <recommendedName>
        <fullName>Rhodopsin kinase grk7-b</fullName>
        <ecNumber evidence="3">2.7.11.14</ecNumber>
    </recommendedName>
    <alternativeName>
        <fullName>G protein-coupled receptor kinase 7B</fullName>
    </alternativeName>
</protein>